<sequence length="133" mass="14514">MARVTVEDCVDKVENRFELVLLAGHRARQISQGAPITVDRDNDKNPVVALREIADETLSPDDLKEDLIHSLQKHVEVDEPEAAPAQIANAAEEIAEGIAEAGEEDVVTFDRMSEEELLAGIEGLVAPEKNDGF</sequence>
<comment type="function">
    <text evidence="1">Promotes RNA polymerase assembly. Latches the N- and C-terminal regions of the beta' subunit thereby facilitating its interaction with the beta and alpha subunits.</text>
</comment>
<comment type="catalytic activity">
    <reaction evidence="1">
        <text>RNA(n) + a ribonucleoside 5'-triphosphate = RNA(n+1) + diphosphate</text>
        <dbReference type="Rhea" id="RHEA:21248"/>
        <dbReference type="Rhea" id="RHEA-COMP:14527"/>
        <dbReference type="Rhea" id="RHEA-COMP:17342"/>
        <dbReference type="ChEBI" id="CHEBI:33019"/>
        <dbReference type="ChEBI" id="CHEBI:61557"/>
        <dbReference type="ChEBI" id="CHEBI:140395"/>
        <dbReference type="EC" id="2.7.7.6"/>
    </reaction>
</comment>
<comment type="subunit">
    <text evidence="1">The RNAP catalytic core consists of 2 alpha, 1 beta, 1 beta' and 1 omega subunit. When a sigma factor is associated with the core the holoenzyme is formed, which can initiate transcription.</text>
</comment>
<comment type="similarity">
    <text evidence="1">Belongs to the RNA polymerase subunit omega family.</text>
</comment>
<evidence type="ECO:0000255" key="1">
    <source>
        <dbReference type="HAMAP-Rule" id="MF_00366"/>
    </source>
</evidence>
<keyword id="KW-0240">DNA-directed RNA polymerase</keyword>
<keyword id="KW-0548">Nucleotidyltransferase</keyword>
<keyword id="KW-1185">Reference proteome</keyword>
<keyword id="KW-0804">Transcription</keyword>
<keyword id="KW-0808">Transferase</keyword>
<organism>
    <name type="scientific">Brucella abortus (strain 2308)</name>
    <dbReference type="NCBI Taxonomy" id="359391"/>
    <lineage>
        <taxon>Bacteria</taxon>
        <taxon>Pseudomonadati</taxon>
        <taxon>Pseudomonadota</taxon>
        <taxon>Alphaproteobacteria</taxon>
        <taxon>Hyphomicrobiales</taxon>
        <taxon>Brucellaceae</taxon>
        <taxon>Brucella/Ochrobactrum group</taxon>
        <taxon>Brucella</taxon>
    </lineage>
</organism>
<reference key="1">
    <citation type="journal article" date="2005" name="Infect. Immun.">
        <title>Whole-genome analyses of speciation events in pathogenic Brucellae.</title>
        <authorList>
            <person name="Chain P.S."/>
            <person name="Comerci D.J."/>
            <person name="Tolmasky M.E."/>
            <person name="Larimer F.W."/>
            <person name="Malfatti S.A."/>
            <person name="Vergez L.M."/>
            <person name="Aguero F."/>
            <person name="Land M.L."/>
            <person name="Ugalde R.A."/>
            <person name="Garcia E."/>
        </authorList>
    </citation>
    <scope>NUCLEOTIDE SEQUENCE [LARGE SCALE GENOMIC DNA]</scope>
    <source>
        <strain>2308</strain>
    </source>
</reference>
<dbReference type="EC" id="2.7.7.6" evidence="1"/>
<dbReference type="EMBL" id="AM040264">
    <property type="protein sequence ID" value="CAJ10627.1"/>
    <property type="molecule type" value="Genomic_DNA"/>
</dbReference>
<dbReference type="RefSeq" id="WP_002963795.1">
    <property type="nucleotide sequence ID" value="NZ_KN046823.1"/>
</dbReference>
<dbReference type="SMR" id="Q2YN12"/>
<dbReference type="STRING" id="359391.BAB1_0671"/>
<dbReference type="GeneID" id="93016943"/>
<dbReference type="KEGG" id="bmf:BAB1_0671"/>
<dbReference type="PATRIC" id="fig|359391.11.peg.2985"/>
<dbReference type="HOGENOM" id="CLU_125406_2_0_5"/>
<dbReference type="PhylomeDB" id="Q2YN12"/>
<dbReference type="Proteomes" id="UP000002719">
    <property type="component" value="Chromosome I"/>
</dbReference>
<dbReference type="GO" id="GO:0000428">
    <property type="term" value="C:DNA-directed RNA polymerase complex"/>
    <property type="evidence" value="ECO:0007669"/>
    <property type="project" value="UniProtKB-KW"/>
</dbReference>
<dbReference type="GO" id="GO:0003677">
    <property type="term" value="F:DNA binding"/>
    <property type="evidence" value="ECO:0007669"/>
    <property type="project" value="UniProtKB-UniRule"/>
</dbReference>
<dbReference type="GO" id="GO:0003899">
    <property type="term" value="F:DNA-directed RNA polymerase activity"/>
    <property type="evidence" value="ECO:0007669"/>
    <property type="project" value="UniProtKB-UniRule"/>
</dbReference>
<dbReference type="GO" id="GO:0006351">
    <property type="term" value="P:DNA-templated transcription"/>
    <property type="evidence" value="ECO:0007669"/>
    <property type="project" value="UniProtKB-UniRule"/>
</dbReference>
<dbReference type="Gene3D" id="3.90.940.10">
    <property type="match status" value="1"/>
</dbReference>
<dbReference type="HAMAP" id="MF_00366">
    <property type="entry name" value="RNApol_bact_RpoZ"/>
    <property type="match status" value="1"/>
</dbReference>
<dbReference type="InterPro" id="IPR003716">
    <property type="entry name" value="DNA-dir_RNA_pol_omega"/>
</dbReference>
<dbReference type="InterPro" id="IPR006110">
    <property type="entry name" value="Pol_omega/Rpo6/RPB6"/>
</dbReference>
<dbReference type="InterPro" id="IPR036161">
    <property type="entry name" value="RPB6/omega-like_sf"/>
</dbReference>
<dbReference type="NCBIfam" id="TIGR00690">
    <property type="entry name" value="rpoZ"/>
    <property type="match status" value="1"/>
</dbReference>
<dbReference type="PANTHER" id="PTHR34476">
    <property type="entry name" value="DNA-DIRECTED RNA POLYMERASE SUBUNIT OMEGA"/>
    <property type="match status" value="1"/>
</dbReference>
<dbReference type="PANTHER" id="PTHR34476:SF1">
    <property type="entry name" value="DNA-DIRECTED RNA POLYMERASE SUBUNIT OMEGA"/>
    <property type="match status" value="1"/>
</dbReference>
<dbReference type="Pfam" id="PF01192">
    <property type="entry name" value="RNA_pol_Rpb6"/>
    <property type="match status" value="1"/>
</dbReference>
<dbReference type="SMART" id="SM01409">
    <property type="entry name" value="RNA_pol_Rpb6"/>
    <property type="match status" value="1"/>
</dbReference>
<dbReference type="SUPFAM" id="SSF63562">
    <property type="entry name" value="RPB6/omega subunit-like"/>
    <property type="match status" value="1"/>
</dbReference>
<feature type="chain" id="PRO_0000237441" description="DNA-directed RNA polymerase subunit omega">
    <location>
        <begin position="1"/>
        <end position="133"/>
    </location>
</feature>
<protein>
    <recommendedName>
        <fullName evidence="1">DNA-directed RNA polymerase subunit omega</fullName>
        <shortName evidence="1">RNAP omega subunit</shortName>
        <ecNumber evidence="1">2.7.7.6</ecNumber>
    </recommendedName>
    <alternativeName>
        <fullName evidence="1">RNA polymerase omega subunit</fullName>
    </alternativeName>
    <alternativeName>
        <fullName evidence="1">Transcriptase subunit omega</fullName>
    </alternativeName>
</protein>
<name>RPOZ_BRUA2</name>
<accession>Q2YN12</accession>
<gene>
    <name evidence="1" type="primary">rpoZ</name>
    <name type="ordered locus">BAB1_0671</name>
</gene>
<proteinExistence type="inferred from homology"/>